<name>TENA_HELPX</name>
<protein>
    <recommendedName>
        <fullName evidence="3">Aminopyrimidine aminohydrolase</fullName>
        <ecNumber evidence="2">3.5.99.2</ecNumber>
    </recommendedName>
</protein>
<dbReference type="EC" id="3.5.99.2" evidence="2"/>
<dbReference type="EMBL" id="AM900414">
    <property type="protein sequence ID" value="CAP12589.1"/>
    <property type="molecule type" value="Genomic_DNA"/>
</dbReference>
<dbReference type="RefSeq" id="WP_001198306.1">
    <property type="nucleotide sequence ID" value="NZ_JBFTEE010000007.1"/>
</dbReference>
<dbReference type="PDB" id="2RD3">
    <property type="method" value="X-ray"/>
    <property type="resolution" value="2.70 A"/>
    <property type="chains" value="A/D=1-217"/>
</dbReference>
<dbReference type="PDB" id="3IBX">
    <property type="method" value="X-ray"/>
    <property type="resolution" value="2.40 A"/>
    <property type="chains" value="A/D=1-217"/>
</dbReference>
<dbReference type="PDBsum" id="2RD3"/>
<dbReference type="PDBsum" id="3IBX"/>
<dbReference type="SMR" id="A8KRL3"/>
<dbReference type="eggNOG" id="COG0819">
    <property type="taxonomic scope" value="Bacteria"/>
</dbReference>
<dbReference type="UniPathway" id="UPA00060"/>
<dbReference type="EvolutionaryTrace" id="A8KRL3"/>
<dbReference type="GO" id="GO:0005829">
    <property type="term" value="C:cytosol"/>
    <property type="evidence" value="ECO:0007669"/>
    <property type="project" value="TreeGrafter"/>
</dbReference>
<dbReference type="GO" id="GO:0050334">
    <property type="term" value="F:thiaminase activity"/>
    <property type="evidence" value="ECO:0007669"/>
    <property type="project" value="UniProtKB-EC"/>
</dbReference>
<dbReference type="GO" id="GO:0009228">
    <property type="term" value="P:thiamine biosynthetic process"/>
    <property type="evidence" value="ECO:0007669"/>
    <property type="project" value="UniProtKB-KW"/>
</dbReference>
<dbReference type="GO" id="GO:0009229">
    <property type="term" value="P:thiamine diphosphate biosynthetic process"/>
    <property type="evidence" value="ECO:0007669"/>
    <property type="project" value="UniProtKB-UniPathway"/>
</dbReference>
<dbReference type="CDD" id="cd19361">
    <property type="entry name" value="TenA_C_HP1287-like"/>
    <property type="match status" value="1"/>
</dbReference>
<dbReference type="FunFam" id="1.20.910.10:FF:000019">
    <property type="entry name" value="Aminopyrimidine aminohydrolase"/>
    <property type="match status" value="1"/>
</dbReference>
<dbReference type="Gene3D" id="1.20.910.10">
    <property type="entry name" value="Heme oxygenase-like"/>
    <property type="match status" value="1"/>
</dbReference>
<dbReference type="InterPro" id="IPR016084">
    <property type="entry name" value="Haem_Oase-like_multi-hlx"/>
</dbReference>
<dbReference type="InterPro" id="IPR004305">
    <property type="entry name" value="Thiaminase-2/PQQC"/>
</dbReference>
<dbReference type="InterPro" id="IPR027574">
    <property type="entry name" value="Thiaminase_II"/>
</dbReference>
<dbReference type="InterPro" id="IPR050967">
    <property type="entry name" value="Thiamine_Salvage_TenA"/>
</dbReference>
<dbReference type="NCBIfam" id="TIGR04306">
    <property type="entry name" value="salvage_TenA"/>
    <property type="match status" value="1"/>
</dbReference>
<dbReference type="PANTHER" id="PTHR43198">
    <property type="entry name" value="BIFUNCTIONAL TH2 PROTEIN"/>
    <property type="match status" value="1"/>
</dbReference>
<dbReference type="PANTHER" id="PTHR43198:SF2">
    <property type="entry name" value="SI:CH1073-67J19.1-RELATED"/>
    <property type="match status" value="1"/>
</dbReference>
<dbReference type="Pfam" id="PF03070">
    <property type="entry name" value="TENA_THI-4"/>
    <property type="match status" value="1"/>
</dbReference>
<dbReference type="SUPFAM" id="SSF48613">
    <property type="entry name" value="Heme oxygenase-like"/>
    <property type="match status" value="1"/>
</dbReference>
<sequence>MQVSQYLYQNAQSIWGDCISHPFVQGIGRGTLERDKFRFYIIQDYLFLLEYAKVFALGVVKACDEAVMREFSNAIQDILNNEMSIHNHYIRELQITQKELQNACPTLANKSYTSYMLAEGFKGSIKEVAAAVLSCGWSYLVIAQNLSQIPNALEHAFYGHWIKGYSSKEFQACVNWNINLLDSLTLASSKQEIEKLKEIFITTSEYEYLFWDMAYQS</sequence>
<organism>
    <name type="scientific">Helicobacter pylori</name>
    <name type="common">Campylobacter pylori</name>
    <dbReference type="NCBI Taxonomy" id="210"/>
    <lineage>
        <taxon>Bacteria</taxon>
        <taxon>Pseudomonadati</taxon>
        <taxon>Campylobacterota</taxon>
        <taxon>Epsilonproteobacteria</taxon>
        <taxon>Campylobacterales</taxon>
        <taxon>Helicobacteraceae</taxon>
        <taxon>Helicobacter</taxon>
    </lineage>
</organism>
<feature type="chain" id="PRO_0000431514" description="Aminopyrimidine aminohydrolase">
    <location>
        <begin position="1"/>
        <end position="217"/>
    </location>
</feature>
<feature type="active site" description="Nucleophile" evidence="1">
    <location>
        <position position="135"/>
    </location>
</feature>
<feature type="active site" description="Proton donor" evidence="1">
    <location>
        <position position="207"/>
    </location>
</feature>
<feature type="binding site" evidence="1">
    <location>
        <position position="44"/>
    </location>
    <ligand>
        <name>substrate</name>
    </ligand>
</feature>
<feature type="binding site" evidence="1">
    <location>
        <position position="139"/>
    </location>
    <ligand>
        <name>substrate</name>
    </ligand>
</feature>
<feature type="binding site" evidence="1">
    <location>
        <position position="165"/>
    </location>
    <ligand>
        <name>substrate</name>
    </ligand>
</feature>
<feature type="mutagenesis site" description="Activity remains very low with 4-amino-5-aminomethyl-2-methylpyrimidine as substrate, and the catalytic efficiency is even decreased by 33-fold.">
    <original>F</original>
    <variation>Y</variation>
    <location>
        <position position="47"/>
    </location>
</feature>
<feature type="helix" evidence="6">
    <location>
        <begin position="3"/>
        <end position="19"/>
    </location>
</feature>
<feature type="helix" evidence="6">
    <location>
        <begin position="22"/>
        <end position="29"/>
    </location>
</feature>
<feature type="helix" evidence="6">
    <location>
        <begin position="34"/>
        <end position="61"/>
    </location>
</feature>
<feature type="helix" evidence="6">
    <location>
        <begin position="65"/>
        <end position="79"/>
    </location>
</feature>
<feature type="turn" evidence="5">
    <location>
        <begin position="81"/>
        <end position="84"/>
    </location>
</feature>
<feature type="helix" evidence="6">
    <location>
        <begin position="85"/>
        <end position="92"/>
    </location>
</feature>
<feature type="helix" evidence="6">
    <location>
        <begin position="97"/>
        <end position="102"/>
    </location>
</feature>
<feature type="helix" evidence="6">
    <location>
        <begin position="107"/>
        <end position="122"/>
    </location>
</feature>
<feature type="helix" evidence="6">
    <location>
        <begin position="125"/>
        <end position="131"/>
    </location>
</feature>
<feature type="helix" evidence="6">
    <location>
        <begin position="133"/>
        <end position="146"/>
    </location>
</feature>
<feature type="strand" evidence="6">
    <location>
        <begin position="149"/>
        <end position="151"/>
    </location>
</feature>
<feature type="turn" evidence="6">
    <location>
        <begin position="152"/>
        <end position="154"/>
    </location>
</feature>
<feature type="turn" evidence="6">
    <location>
        <begin position="156"/>
        <end position="158"/>
    </location>
</feature>
<feature type="helix" evidence="6">
    <location>
        <begin position="159"/>
        <end position="164"/>
    </location>
</feature>
<feature type="helix" evidence="6">
    <location>
        <begin position="168"/>
        <end position="184"/>
    </location>
</feature>
<feature type="helix" evidence="6">
    <location>
        <begin position="190"/>
        <end position="215"/>
    </location>
</feature>
<proteinExistence type="evidence at protein level"/>
<evidence type="ECO:0000250" key="1">
    <source>
        <dbReference type="UniProtKB" id="P25052"/>
    </source>
</evidence>
<evidence type="ECO:0000269" key="2">
    <source>
    </source>
</evidence>
<evidence type="ECO:0000303" key="3">
    <source>
    </source>
</evidence>
<evidence type="ECO:0000305" key="4"/>
<evidence type="ECO:0007829" key="5">
    <source>
        <dbReference type="PDB" id="2RD3"/>
    </source>
</evidence>
<evidence type="ECO:0007829" key="6">
    <source>
        <dbReference type="PDB" id="3IBX"/>
    </source>
</evidence>
<keyword id="KW-0002">3D-structure</keyword>
<keyword id="KW-0378">Hydrolase</keyword>
<keyword id="KW-0784">Thiamine biosynthesis</keyword>
<accession>A8KRL3</accession>
<gene>
    <name evidence="3" type="primary">tenA</name>
</gene>
<comment type="function">
    <text evidence="2">Catalyzes an amino-pyrimidine hydrolysis reaction at the C5' of the pyrimidine moiety of thiamine compounds to give a hydroxymethylpyrimidine (HMP). Displays low activity on 4-amino-5-aminomethyl-2-methylpyrimidine as substrate, indicating that the enzyme may act on a different HMP precursor that may derive from the human stomach food assumption or processing. Is probably involved in thiamine biosynthesis. Does not display thiaminase II activity, as it is unable to hydrolyze thiamine.</text>
</comment>
<comment type="catalytic activity">
    <reaction evidence="2">
        <text>4-amino-5-aminomethyl-2-methylpyrimidine + H2O = 4-amino-5-hydroxymethyl-2-methylpyrimidine + NH4(+)</text>
        <dbReference type="Rhea" id="RHEA:31799"/>
        <dbReference type="ChEBI" id="CHEBI:15377"/>
        <dbReference type="ChEBI" id="CHEBI:16892"/>
        <dbReference type="ChEBI" id="CHEBI:28938"/>
        <dbReference type="ChEBI" id="CHEBI:63416"/>
        <dbReference type="EC" id="3.5.99.2"/>
    </reaction>
</comment>
<comment type="biophysicochemical properties">
    <kinetics>
        <KM evidence="2">58 uM for 4-amino-5-aminomethyl-2-methylpyrimidine</KM>
        <text evidence="2">kcat is 1.7 min(-1) for the hydrolysis of 4-amino-5-aminomethyl-2-methylpyrimidine.</text>
    </kinetics>
    <phDependence>
        <text evidence="2">Activity is lost at pH 6.</text>
    </phDependence>
</comment>
<comment type="pathway">
    <text evidence="3">Cofactor biosynthesis; thiamine diphosphate biosynthesis.</text>
</comment>
<comment type="subunit">
    <text evidence="2">Homotetramer.</text>
</comment>
<comment type="miscellaneous">
    <text evidence="3 4">H.pylori is expected to possess a reduced thiamine biosynthetic pathway. Some enzymes involved in de novo thiamine biosynthesis in other organisms, such as ThiO, ThiS and ThiG, are missing in this species. The very acidic environment of the stomach makes the accumulation of formylaminopyrimidine very unlikely because it is mainly a base-degraded derivative of thiamine; formylaminopyrimidine is the precursor identified in a thiamine salvage pathway in Bacillus species.</text>
</comment>
<comment type="similarity">
    <text evidence="4">Belongs to the TenA family.</text>
</comment>
<reference key="1">
    <citation type="submission" date="2007-10" db="EMBL/GenBank/DDBJ databases">
        <title>The structural and functional characterization of HP1287 from Helicobacter pylori demonstrates it is a tenA homologue.</title>
        <authorList>
            <person name="Barison N."/>
            <person name="Cendron L."/>
            <person name="Trento A."/>
            <person name="Angelini A."/>
            <person name="Zanotti G."/>
        </authorList>
    </citation>
    <scope>NUCLEOTIDE SEQUENCE [GENOMIC DNA]</scope>
    <source>
        <strain>DSM 4867 / CCUG 17874 / NCTC 11638</strain>
    </source>
</reference>
<reference key="2">
    <citation type="journal article" date="2009" name="FEBS J.">
        <title>Structural and mutational analysis of TenA protein (HP1287) from the Helicobacter pylori thiamin salvage pathway - evidence of a different substrate specificity.</title>
        <authorList>
            <person name="Barison N."/>
            <person name="Cendron L."/>
            <person name="Trento A."/>
            <person name="Angelini A."/>
            <person name="Zanotti G."/>
        </authorList>
    </citation>
    <scope>X-RAY CRYSTALLOGRAPHY (2.40 ANGSTROMS) OF WILD-TYPE AND MUTANT TYR-47</scope>
    <scope>FUNCTION</scope>
    <scope>CATALYTIC ACTIVITY</scope>
    <scope>SUBSTRATE SPECIFICITY</scope>
    <scope>BIOPHYSICOCHEMICAL PROPERTIES</scope>
    <scope>SUBUNIT</scope>
    <scope>MUTAGENESIS OF PHE-47</scope>
    <source>
        <strain>DSM 4867 / CCUG 17874 / NCTC 11638</strain>
    </source>
</reference>